<reference key="1">
    <citation type="journal article" date="1990" name="Proc. Natl. Acad. Sci. U.S.A.">
        <title>Expression and fine structure of the gene encoding N epsilon-(indole-3-acetyl)-L-lysine synthetase from Pseudomonas savastanoi.</title>
        <authorList>
            <person name="Roberto F."/>
            <person name="Klee H."/>
            <person name="White F."/>
            <person name="Nordeen R."/>
            <person name="Kosuge T."/>
        </authorList>
    </citation>
    <scope>NUCLEOTIDE SEQUENCE [GENOMIC DNA]</scope>
    <source>
        <strain>EW2009</strain>
    </source>
</reference>
<geneLocation type="plasmid">
    <name>pIAA1</name>
</geneLocation>
<comment type="function">
    <text>May be a membrane-bound protein, possibly involved in IAA or IAA-Lysine transport.</text>
</comment>
<organism>
    <name type="scientific">Pseudomonas savastanoi</name>
    <name type="common">Pseudomonas syringae pv. savastanoi</name>
    <dbReference type="NCBI Taxonomy" id="29438"/>
    <lineage>
        <taxon>Bacteria</taxon>
        <taxon>Pseudomonadati</taxon>
        <taxon>Pseudomonadota</taxon>
        <taxon>Gammaproteobacteria</taxon>
        <taxon>Pseudomonadales</taxon>
        <taxon>Pseudomonadaceae</taxon>
        <taxon>Pseudomonas</taxon>
    </lineage>
</organism>
<accession>P18205</accession>
<name>YIAL_PSESS</name>
<feature type="chain" id="PRO_0000066264" description="Uncharacterized 21 kDa protein in iaaL 5'region">
    <location>
        <begin position="1"/>
        <end position="302"/>
    </location>
</feature>
<keyword id="KW-0614">Plasmid</keyword>
<keyword id="KW-0813">Transport</keyword>
<dbReference type="EMBL" id="M35373">
    <property type="protein sequence ID" value="AAA25849.1"/>
    <property type="molecule type" value="Genomic_DNA"/>
</dbReference>
<dbReference type="PIR" id="B35961">
    <property type="entry name" value="B35961"/>
</dbReference>
<dbReference type="SMR" id="P18205"/>
<dbReference type="GO" id="GO:0005886">
    <property type="term" value="C:plasma membrane"/>
    <property type="evidence" value="ECO:0007669"/>
    <property type="project" value="TreeGrafter"/>
</dbReference>
<dbReference type="GO" id="GO:0015297">
    <property type="term" value="F:antiporter activity"/>
    <property type="evidence" value="ECO:0007669"/>
    <property type="project" value="InterPro"/>
</dbReference>
<dbReference type="GO" id="GO:0042910">
    <property type="term" value="F:xenobiotic transmembrane transporter activity"/>
    <property type="evidence" value="ECO:0007669"/>
    <property type="project" value="InterPro"/>
</dbReference>
<dbReference type="InterPro" id="IPR002528">
    <property type="entry name" value="MATE_fam"/>
</dbReference>
<dbReference type="InterPro" id="IPR050222">
    <property type="entry name" value="MATE_MdtK"/>
</dbReference>
<dbReference type="PANTHER" id="PTHR43298:SF2">
    <property type="entry name" value="FMN_FAD EXPORTER YEEO-RELATED"/>
    <property type="match status" value="1"/>
</dbReference>
<dbReference type="PANTHER" id="PTHR43298">
    <property type="entry name" value="MULTIDRUG RESISTANCE PROTEIN NORM-RELATED"/>
    <property type="match status" value="1"/>
</dbReference>
<dbReference type="Pfam" id="PF01554">
    <property type="entry name" value="MatE"/>
    <property type="match status" value="1"/>
</dbReference>
<sequence length="302" mass="32450">MRADPAQCRLRQTGDVDPADGDGRRCHRRSPAYCGVRSGPGGCRHRYLISSLVSACLGFYYVHRVAHLTCRVSLKNLSGDIRNIGRTALPAVIGNLATPVGMAYVMAAMAPFGSQALATIGVIDRVIQVAFCVVFALPGALIPILGQNLGAMNTARVSQAIKMTYGLLIGYGSVTSLLLILLAEPLASLFHLAAERQVVFFAFCRWGGALDAHRAAIHCHLSLPQYGATGVRHTVRLVPRHLGTMPFVWYGAHKFGSVGVMLGQLLGNTIVAFCACVARASAHEKDVGHRDPFNREPIPPQE</sequence>
<protein>
    <recommendedName>
        <fullName>Uncharacterized 21 kDa protein in iaaL 5'region</fullName>
    </recommendedName>
    <alternativeName>
        <fullName>ORF 1</fullName>
    </alternativeName>
</protein>
<proteinExistence type="predicted"/>